<reference key="1">
    <citation type="submission" date="2007-03" db="EMBL/GenBank/DDBJ databases">
        <title>Complete sequence of chromosome 1 of Burkholderia vietnamiensis G4.</title>
        <authorList>
            <consortium name="US DOE Joint Genome Institute"/>
            <person name="Copeland A."/>
            <person name="Lucas S."/>
            <person name="Lapidus A."/>
            <person name="Barry K."/>
            <person name="Detter J.C."/>
            <person name="Glavina del Rio T."/>
            <person name="Hammon N."/>
            <person name="Israni S."/>
            <person name="Dalin E."/>
            <person name="Tice H."/>
            <person name="Pitluck S."/>
            <person name="Chain P."/>
            <person name="Malfatti S."/>
            <person name="Shin M."/>
            <person name="Vergez L."/>
            <person name="Schmutz J."/>
            <person name="Larimer F."/>
            <person name="Land M."/>
            <person name="Hauser L."/>
            <person name="Kyrpides N."/>
            <person name="Tiedje J."/>
            <person name="Richardson P."/>
        </authorList>
    </citation>
    <scope>NUCLEOTIDE SEQUENCE [LARGE SCALE GENOMIC DNA]</scope>
    <source>
        <strain>G4 / LMG 22486</strain>
    </source>
</reference>
<feature type="chain" id="PRO_1000056146" description="Bifunctional protein GlmU">
    <location>
        <begin position="1"/>
        <end position="453"/>
    </location>
</feature>
<feature type="region of interest" description="Pyrophosphorylase" evidence="1">
    <location>
        <begin position="1"/>
        <end position="225"/>
    </location>
</feature>
<feature type="region of interest" description="Linker" evidence="1">
    <location>
        <begin position="226"/>
        <end position="246"/>
    </location>
</feature>
<feature type="region of interest" description="N-acetyltransferase" evidence="1">
    <location>
        <begin position="247"/>
        <end position="453"/>
    </location>
</feature>
<feature type="active site" description="Proton acceptor" evidence="1">
    <location>
        <position position="359"/>
    </location>
</feature>
<feature type="binding site" evidence="1">
    <location>
        <begin position="6"/>
        <end position="9"/>
    </location>
    <ligand>
        <name>UDP-N-acetyl-alpha-D-glucosamine</name>
        <dbReference type="ChEBI" id="CHEBI:57705"/>
    </ligand>
</feature>
<feature type="binding site" evidence="1">
    <location>
        <position position="20"/>
    </location>
    <ligand>
        <name>UDP-N-acetyl-alpha-D-glucosamine</name>
        <dbReference type="ChEBI" id="CHEBI:57705"/>
    </ligand>
</feature>
<feature type="binding site" evidence="1">
    <location>
        <position position="71"/>
    </location>
    <ligand>
        <name>UDP-N-acetyl-alpha-D-glucosamine</name>
        <dbReference type="ChEBI" id="CHEBI:57705"/>
    </ligand>
</feature>
<feature type="binding site" evidence="1">
    <location>
        <begin position="76"/>
        <end position="77"/>
    </location>
    <ligand>
        <name>UDP-N-acetyl-alpha-D-glucosamine</name>
        <dbReference type="ChEBI" id="CHEBI:57705"/>
    </ligand>
</feature>
<feature type="binding site" evidence="1">
    <location>
        <begin position="98"/>
        <end position="100"/>
    </location>
    <ligand>
        <name>UDP-N-acetyl-alpha-D-glucosamine</name>
        <dbReference type="ChEBI" id="CHEBI:57705"/>
    </ligand>
</feature>
<feature type="binding site" evidence="1">
    <location>
        <position position="100"/>
    </location>
    <ligand>
        <name>Mg(2+)</name>
        <dbReference type="ChEBI" id="CHEBI:18420"/>
    </ligand>
</feature>
<feature type="binding site" evidence="1">
    <location>
        <position position="135"/>
    </location>
    <ligand>
        <name>UDP-N-acetyl-alpha-D-glucosamine</name>
        <dbReference type="ChEBI" id="CHEBI:57705"/>
    </ligand>
</feature>
<feature type="binding site" evidence="1">
    <location>
        <position position="150"/>
    </location>
    <ligand>
        <name>UDP-N-acetyl-alpha-D-glucosamine</name>
        <dbReference type="ChEBI" id="CHEBI:57705"/>
    </ligand>
</feature>
<feature type="binding site" evidence="1">
    <location>
        <position position="165"/>
    </location>
    <ligand>
        <name>UDP-N-acetyl-alpha-D-glucosamine</name>
        <dbReference type="ChEBI" id="CHEBI:57705"/>
    </ligand>
</feature>
<feature type="binding site" evidence="1">
    <location>
        <position position="223"/>
    </location>
    <ligand>
        <name>Mg(2+)</name>
        <dbReference type="ChEBI" id="CHEBI:18420"/>
    </ligand>
</feature>
<feature type="binding site" evidence="1">
    <location>
        <position position="223"/>
    </location>
    <ligand>
        <name>UDP-N-acetyl-alpha-D-glucosamine</name>
        <dbReference type="ChEBI" id="CHEBI:57705"/>
    </ligand>
</feature>
<feature type="binding site" evidence="1">
    <location>
        <position position="329"/>
    </location>
    <ligand>
        <name>UDP-N-acetyl-alpha-D-glucosamine</name>
        <dbReference type="ChEBI" id="CHEBI:57705"/>
    </ligand>
</feature>
<feature type="binding site" evidence="1">
    <location>
        <position position="347"/>
    </location>
    <ligand>
        <name>UDP-N-acetyl-alpha-D-glucosamine</name>
        <dbReference type="ChEBI" id="CHEBI:57705"/>
    </ligand>
</feature>
<feature type="binding site" evidence="1">
    <location>
        <position position="362"/>
    </location>
    <ligand>
        <name>UDP-N-acetyl-alpha-D-glucosamine</name>
        <dbReference type="ChEBI" id="CHEBI:57705"/>
    </ligand>
</feature>
<feature type="binding site" evidence="1">
    <location>
        <position position="373"/>
    </location>
    <ligand>
        <name>UDP-N-acetyl-alpha-D-glucosamine</name>
        <dbReference type="ChEBI" id="CHEBI:57705"/>
    </ligand>
</feature>
<feature type="binding site" evidence="1">
    <location>
        <position position="376"/>
    </location>
    <ligand>
        <name>acetyl-CoA</name>
        <dbReference type="ChEBI" id="CHEBI:57288"/>
    </ligand>
</feature>
<feature type="binding site" evidence="1">
    <location>
        <begin position="382"/>
        <end position="383"/>
    </location>
    <ligand>
        <name>acetyl-CoA</name>
        <dbReference type="ChEBI" id="CHEBI:57288"/>
    </ligand>
</feature>
<feature type="binding site" evidence="1">
    <location>
        <position position="401"/>
    </location>
    <ligand>
        <name>acetyl-CoA</name>
        <dbReference type="ChEBI" id="CHEBI:57288"/>
    </ligand>
</feature>
<feature type="binding site" evidence="1">
    <location>
        <position position="419"/>
    </location>
    <ligand>
        <name>acetyl-CoA</name>
        <dbReference type="ChEBI" id="CHEBI:57288"/>
    </ligand>
</feature>
<sequence length="453" mass="47980">MNIVILAAGTGKRMRSALPKVLHPLAGRPLLSHVIATARTLQPSRLVVVVGHGAEQVQAAVAAPDVQFAVQAEQLGTGHAVRQALPLLDPAQPTLVLYGDVPLTRATTLKRLVDAAHDGRYGILTVTLDDPTGYGRIVRDAAGFVTRIVEQKDASPEQLKIAEINTGIIVTPTAQLSMWLGALKNENAQGEYYLTDVVELAIEAGFEIVTTQPDDDWETLGVNSKAQLAELERIHQRNVADALLVEGVTLADPARVDVRGTLRCGRDVSIDVNCVFEGDVTLADDVTVGPNCVIRNASIGAGTRIDAFTHIDGAQLGANTVIGPYARLRPGAQLADEAHVGNFVEVKNAVIGHGSKANHLTYIGDADIGARVNIGAGTITCNYDGANKFRTVIEDDVFVGSDTQLVAPVRVGRGVTIAAGTTVWKDVAEGTLALNEKTQTAKSGYVRPVKKKS</sequence>
<comment type="function">
    <text evidence="1">Catalyzes the last two sequential reactions in the de novo biosynthetic pathway for UDP-N-acetylglucosamine (UDP-GlcNAc). The C-terminal domain catalyzes the transfer of acetyl group from acetyl coenzyme A to glucosamine-1-phosphate (GlcN-1-P) to produce N-acetylglucosamine-1-phosphate (GlcNAc-1-P), which is converted into UDP-GlcNAc by the transfer of uridine 5-monophosphate (from uridine 5-triphosphate), a reaction catalyzed by the N-terminal domain.</text>
</comment>
<comment type="catalytic activity">
    <reaction evidence="1">
        <text>alpha-D-glucosamine 1-phosphate + acetyl-CoA = N-acetyl-alpha-D-glucosamine 1-phosphate + CoA + H(+)</text>
        <dbReference type="Rhea" id="RHEA:13725"/>
        <dbReference type="ChEBI" id="CHEBI:15378"/>
        <dbReference type="ChEBI" id="CHEBI:57287"/>
        <dbReference type="ChEBI" id="CHEBI:57288"/>
        <dbReference type="ChEBI" id="CHEBI:57776"/>
        <dbReference type="ChEBI" id="CHEBI:58516"/>
        <dbReference type="EC" id="2.3.1.157"/>
    </reaction>
</comment>
<comment type="catalytic activity">
    <reaction evidence="1">
        <text>N-acetyl-alpha-D-glucosamine 1-phosphate + UTP + H(+) = UDP-N-acetyl-alpha-D-glucosamine + diphosphate</text>
        <dbReference type="Rhea" id="RHEA:13509"/>
        <dbReference type="ChEBI" id="CHEBI:15378"/>
        <dbReference type="ChEBI" id="CHEBI:33019"/>
        <dbReference type="ChEBI" id="CHEBI:46398"/>
        <dbReference type="ChEBI" id="CHEBI:57705"/>
        <dbReference type="ChEBI" id="CHEBI:57776"/>
        <dbReference type="EC" id="2.7.7.23"/>
    </reaction>
</comment>
<comment type="cofactor">
    <cofactor evidence="1">
        <name>Mg(2+)</name>
        <dbReference type="ChEBI" id="CHEBI:18420"/>
    </cofactor>
    <text evidence="1">Binds 1 Mg(2+) ion per subunit.</text>
</comment>
<comment type="pathway">
    <text evidence="1">Nucleotide-sugar biosynthesis; UDP-N-acetyl-alpha-D-glucosamine biosynthesis; N-acetyl-alpha-D-glucosamine 1-phosphate from alpha-D-glucosamine 6-phosphate (route II): step 2/2.</text>
</comment>
<comment type="pathway">
    <text evidence="1">Nucleotide-sugar biosynthesis; UDP-N-acetyl-alpha-D-glucosamine biosynthesis; UDP-N-acetyl-alpha-D-glucosamine from N-acetyl-alpha-D-glucosamine 1-phosphate: step 1/1.</text>
</comment>
<comment type="pathway">
    <text evidence="1">Bacterial outer membrane biogenesis; LPS lipid A biosynthesis.</text>
</comment>
<comment type="subunit">
    <text evidence="1">Homotrimer.</text>
</comment>
<comment type="subcellular location">
    <subcellularLocation>
        <location evidence="1">Cytoplasm</location>
    </subcellularLocation>
</comment>
<comment type="similarity">
    <text evidence="1">In the N-terminal section; belongs to the N-acetylglucosamine-1-phosphate uridyltransferase family.</text>
</comment>
<comment type="similarity">
    <text evidence="1">In the C-terminal section; belongs to the transferase hexapeptide repeat family.</text>
</comment>
<organism>
    <name type="scientific">Burkholderia vietnamiensis (strain G4 / LMG 22486)</name>
    <name type="common">Burkholderia cepacia (strain R1808)</name>
    <dbReference type="NCBI Taxonomy" id="269482"/>
    <lineage>
        <taxon>Bacteria</taxon>
        <taxon>Pseudomonadati</taxon>
        <taxon>Pseudomonadota</taxon>
        <taxon>Betaproteobacteria</taxon>
        <taxon>Burkholderiales</taxon>
        <taxon>Burkholderiaceae</taxon>
        <taxon>Burkholderia</taxon>
        <taxon>Burkholderia cepacia complex</taxon>
    </lineage>
</organism>
<name>GLMU_BURVG</name>
<keyword id="KW-0012">Acyltransferase</keyword>
<keyword id="KW-0133">Cell shape</keyword>
<keyword id="KW-0961">Cell wall biogenesis/degradation</keyword>
<keyword id="KW-0963">Cytoplasm</keyword>
<keyword id="KW-0460">Magnesium</keyword>
<keyword id="KW-0479">Metal-binding</keyword>
<keyword id="KW-0511">Multifunctional enzyme</keyword>
<keyword id="KW-0548">Nucleotidyltransferase</keyword>
<keyword id="KW-0573">Peptidoglycan synthesis</keyword>
<keyword id="KW-0677">Repeat</keyword>
<keyword id="KW-0808">Transferase</keyword>
<gene>
    <name evidence="1" type="primary">glmU</name>
    <name type="ordered locus">Bcep1808_3069</name>
</gene>
<protein>
    <recommendedName>
        <fullName evidence="1">Bifunctional protein GlmU</fullName>
    </recommendedName>
    <domain>
        <recommendedName>
            <fullName evidence="1">UDP-N-acetylglucosamine pyrophosphorylase</fullName>
            <ecNumber evidence="1">2.7.7.23</ecNumber>
        </recommendedName>
        <alternativeName>
            <fullName evidence="1">N-acetylglucosamine-1-phosphate uridyltransferase</fullName>
        </alternativeName>
    </domain>
    <domain>
        <recommendedName>
            <fullName evidence="1">Glucosamine-1-phosphate N-acetyltransferase</fullName>
            <ecNumber evidence="1">2.3.1.157</ecNumber>
        </recommendedName>
    </domain>
</protein>
<proteinExistence type="inferred from homology"/>
<accession>A4JIF7</accession>
<evidence type="ECO:0000255" key="1">
    <source>
        <dbReference type="HAMAP-Rule" id="MF_01631"/>
    </source>
</evidence>
<dbReference type="EC" id="2.7.7.23" evidence="1"/>
<dbReference type="EC" id="2.3.1.157" evidence="1"/>
<dbReference type="EMBL" id="CP000614">
    <property type="protein sequence ID" value="ABO56060.1"/>
    <property type="molecule type" value="Genomic_DNA"/>
</dbReference>
<dbReference type="SMR" id="A4JIF7"/>
<dbReference type="KEGG" id="bvi:Bcep1808_3069"/>
<dbReference type="eggNOG" id="COG1207">
    <property type="taxonomic scope" value="Bacteria"/>
</dbReference>
<dbReference type="HOGENOM" id="CLU_029499_15_2_4"/>
<dbReference type="UniPathway" id="UPA00113">
    <property type="reaction ID" value="UER00532"/>
</dbReference>
<dbReference type="UniPathway" id="UPA00113">
    <property type="reaction ID" value="UER00533"/>
</dbReference>
<dbReference type="UniPathway" id="UPA00973"/>
<dbReference type="Proteomes" id="UP000002287">
    <property type="component" value="Chromosome 1"/>
</dbReference>
<dbReference type="GO" id="GO:0005737">
    <property type="term" value="C:cytoplasm"/>
    <property type="evidence" value="ECO:0007669"/>
    <property type="project" value="UniProtKB-SubCell"/>
</dbReference>
<dbReference type="GO" id="GO:0016020">
    <property type="term" value="C:membrane"/>
    <property type="evidence" value="ECO:0007669"/>
    <property type="project" value="GOC"/>
</dbReference>
<dbReference type="GO" id="GO:0019134">
    <property type="term" value="F:glucosamine-1-phosphate N-acetyltransferase activity"/>
    <property type="evidence" value="ECO:0007669"/>
    <property type="project" value="UniProtKB-UniRule"/>
</dbReference>
<dbReference type="GO" id="GO:0000287">
    <property type="term" value="F:magnesium ion binding"/>
    <property type="evidence" value="ECO:0007669"/>
    <property type="project" value="UniProtKB-UniRule"/>
</dbReference>
<dbReference type="GO" id="GO:0003977">
    <property type="term" value="F:UDP-N-acetylglucosamine diphosphorylase activity"/>
    <property type="evidence" value="ECO:0007669"/>
    <property type="project" value="UniProtKB-UniRule"/>
</dbReference>
<dbReference type="GO" id="GO:0000902">
    <property type="term" value="P:cell morphogenesis"/>
    <property type="evidence" value="ECO:0007669"/>
    <property type="project" value="UniProtKB-UniRule"/>
</dbReference>
<dbReference type="GO" id="GO:0071555">
    <property type="term" value="P:cell wall organization"/>
    <property type="evidence" value="ECO:0007669"/>
    <property type="project" value="UniProtKB-KW"/>
</dbReference>
<dbReference type="GO" id="GO:0009245">
    <property type="term" value="P:lipid A biosynthetic process"/>
    <property type="evidence" value="ECO:0007669"/>
    <property type="project" value="UniProtKB-UniRule"/>
</dbReference>
<dbReference type="GO" id="GO:0009252">
    <property type="term" value="P:peptidoglycan biosynthetic process"/>
    <property type="evidence" value="ECO:0007669"/>
    <property type="project" value="UniProtKB-UniRule"/>
</dbReference>
<dbReference type="GO" id="GO:0008360">
    <property type="term" value="P:regulation of cell shape"/>
    <property type="evidence" value="ECO:0007669"/>
    <property type="project" value="UniProtKB-KW"/>
</dbReference>
<dbReference type="GO" id="GO:0006048">
    <property type="term" value="P:UDP-N-acetylglucosamine biosynthetic process"/>
    <property type="evidence" value="ECO:0007669"/>
    <property type="project" value="UniProtKB-UniPathway"/>
</dbReference>
<dbReference type="CDD" id="cd02540">
    <property type="entry name" value="GT2_GlmU_N_bac"/>
    <property type="match status" value="1"/>
</dbReference>
<dbReference type="CDD" id="cd03353">
    <property type="entry name" value="LbH_GlmU_C"/>
    <property type="match status" value="1"/>
</dbReference>
<dbReference type="Gene3D" id="2.160.10.10">
    <property type="entry name" value="Hexapeptide repeat proteins"/>
    <property type="match status" value="1"/>
</dbReference>
<dbReference type="Gene3D" id="3.90.550.10">
    <property type="entry name" value="Spore Coat Polysaccharide Biosynthesis Protein SpsA, Chain A"/>
    <property type="match status" value="1"/>
</dbReference>
<dbReference type="HAMAP" id="MF_01631">
    <property type="entry name" value="GlmU"/>
    <property type="match status" value="1"/>
</dbReference>
<dbReference type="InterPro" id="IPR005882">
    <property type="entry name" value="Bifunctional_GlmU"/>
</dbReference>
<dbReference type="InterPro" id="IPR050065">
    <property type="entry name" value="GlmU-like"/>
</dbReference>
<dbReference type="InterPro" id="IPR038009">
    <property type="entry name" value="GlmU_C_LbH"/>
</dbReference>
<dbReference type="InterPro" id="IPR001451">
    <property type="entry name" value="Hexapep"/>
</dbReference>
<dbReference type="InterPro" id="IPR018357">
    <property type="entry name" value="Hexapep_transf_CS"/>
</dbReference>
<dbReference type="InterPro" id="IPR025877">
    <property type="entry name" value="MobA-like_NTP_Trfase"/>
</dbReference>
<dbReference type="InterPro" id="IPR029044">
    <property type="entry name" value="Nucleotide-diphossugar_trans"/>
</dbReference>
<dbReference type="InterPro" id="IPR011004">
    <property type="entry name" value="Trimer_LpxA-like_sf"/>
</dbReference>
<dbReference type="NCBIfam" id="TIGR01173">
    <property type="entry name" value="glmU"/>
    <property type="match status" value="1"/>
</dbReference>
<dbReference type="PANTHER" id="PTHR43584:SF3">
    <property type="entry name" value="BIFUNCTIONAL PROTEIN GLMU"/>
    <property type="match status" value="1"/>
</dbReference>
<dbReference type="PANTHER" id="PTHR43584">
    <property type="entry name" value="NUCLEOTIDYL TRANSFERASE"/>
    <property type="match status" value="1"/>
</dbReference>
<dbReference type="Pfam" id="PF00132">
    <property type="entry name" value="Hexapep"/>
    <property type="match status" value="2"/>
</dbReference>
<dbReference type="Pfam" id="PF12804">
    <property type="entry name" value="NTP_transf_3"/>
    <property type="match status" value="1"/>
</dbReference>
<dbReference type="SUPFAM" id="SSF53448">
    <property type="entry name" value="Nucleotide-diphospho-sugar transferases"/>
    <property type="match status" value="1"/>
</dbReference>
<dbReference type="SUPFAM" id="SSF51161">
    <property type="entry name" value="Trimeric LpxA-like enzymes"/>
    <property type="match status" value="1"/>
</dbReference>
<dbReference type="PROSITE" id="PS00101">
    <property type="entry name" value="HEXAPEP_TRANSFERASES"/>
    <property type="match status" value="2"/>
</dbReference>